<evidence type="ECO:0000250" key="1">
    <source>
        <dbReference type="UniProtKB" id="P00939"/>
    </source>
</evidence>
<evidence type="ECO:0000250" key="2">
    <source>
        <dbReference type="UniProtKB" id="P00940"/>
    </source>
</evidence>
<evidence type="ECO:0000255" key="3">
    <source>
        <dbReference type="PROSITE-ProRule" id="PRU10127"/>
    </source>
</evidence>
<evidence type="ECO:0000255" key="4">
    <source>
        <dbReference type="RuleBase" id="RU363013"/>
    </source>
</evidence>
<evidence type="ECO:0000269" key="5">
    <source>
    </source>
</evidence>
<evidence type="ECO:0000303" key="6">
    <source>
    </source>
</evidence>
<evidence type="ECO:0000305" key="7"/>
<evidence type="ECO:0000312" key="8">
    <source>
        <dbReference type="EMBL" id="AEB54655.1"/>
    </source>
</evidence>
<protein>
    <recommendedName>
        <fullName evidence="3 4 6">Triosephosphate isomerase</fullName>
        <shortName evidence="3 6">TIM</shortName>
        <ecNumber evidence="3 4">5.3.1.1</ecNumber>
    </recommendedName>
    <alternativeName>
        <fullName evidence="1">Methylglyoxal synthase</fullName>
        <ecNumber evidence="1">4.2.3.3</ecNumber>
    </alternativeName>
    <alternativeName>
        <fullName evidence="3">Triose-phosphate isomerase</fullName>
    </alternativeName>
    <allergenName evidence="7">Pro c 8.0101</allergenName>
</protein>
<keyword id="KW-0020">Allergen</keyword>
<keyword id="KW-0963">Cytoplasm</keyword>
<keyword id="KW-0903">Direct protein sequencing</keyword>
<keyword id="KW-0312">Gluconeogenesis</keyword>
<keyword id="KW-0324">Glycolysis</keyword>
<keyword id="KW-0389">IgE-binding protein</keyword>
<keyword id="KW-0413">Isomerase</keyword>
<keyword id="KW-0456">Lyase</keyword>
<sequence length="248" mass="27146">MANQRKFFVGGNWKMNGDRAGIDSIISFMKGPLSADTEVVVGCPQCYLMYTREHLPSNIGVAAQNCYKVAKGAFTGEISPSMIKDCGCEWVILGHSERRNVFNEPDTLISEKVGHALEAGLKVIPCIGEKLEERESNRTEEVVFAQMKALVPNISDWSRVVIAYEPVWAIGTGKTATPEQAQEVHAKLRQWLRDNVNAEVADSTRIIYGGSVTPGNCKELAKTGDIDGFLVGGASLKPDFVQIINARD</sequence>
<comment type="function">
    <text evidence="1">Triosephosphate isomerase is an extremely efficient metabolic enzyme that catalyzes the interconversion between dihydroxyacetone phosphate (DHAP) and D-glyceraldehyde-3-phosphate (G3P) in glycolysis and gluconeogenesis.</text>
</comment>
<comment type="function">
    <text evidence="1">It is also responsible for the non-negligible production of methylglyoxal a reactive cytotoxic side-product that modifies and can alter proteins, DNA and lipids.</text>
</comment>
<comment type="catalytic activity">
    <reaction evidence="3 4">
        <text>D-glyceraldehyde 3-phosphate = dihydroxyacetone phosphate</text>
        <dbReference type="Rhea" id="RHEA:18585"/>
        <dbReference type="ChEBI" id="CHEBI:57642"/>
        <dbReference type="ChEBI" id="CHEBI:59776"/>
        <dbReference type="EC" id="5.3.1.1"/>
    </reaction>
</comment>
<comment type="catalytic activity">
    <reaction evidence="1">
        <text>dihydroxyacetone phosphate = methylglyoxal + phosphate</text>
        <dbReference type="Rhea" id="RHEA:17937"/>
        <dbReference type="ChEBI" id="CHEBI:17158"/>
        <dbReference type="ChEBI" id="CHEBI:43474"/>
        <dbReference type="ChEBI" id="CHEBI:57642"/>
        <dbReference type="EC" id="4.2.3.3"/>
    </reaction>
</comment>
<comment type="biophysicochemical properties">
    <phDependence>
        <text evidence="5">Unstable only at extreme acidic (pH 1.0) or alkaline conditions (pH 11.0). IgE-binding activity is relatively stable under acidic and alkaline conditions, however the activity is increased between pH 2.0-3.0.</text>
    </phDependence>
    <temperatureDependence>
        <text evidence="5">Stable up to 100 degrees Celsius. IgE-binding activity is reduced with increasing temperature higher than 60 degrees Celsius.</text>
    </temperatureDependence>
</comment>
<comment type="pathway">
    <text evidence="3 4">Carbohydrate biosynthesis; gluconeogenesis.</text>
</comment>
<comment type="pathway">
    <text evidence="3 4">Carbohydrate degradation; glycolysis; D-glyceraldehyde 3-phosphate from glycerone phosphate: step 1/1.</text>
</comment>
<comment type="subunit">
    <text evidence="3">Homodimer.</text>
</comment>
<comment type="subcellular location">
    <subcellularLocation>
        <location evidence="3">Cytoplasm</location>
    </subcellularLocation>
</comment>
<comment type="tissue specificity">
    <text evidence="5">Expressed in skeletal muscle (at protein level).</text>
</comment>
<comment type="allergen">
    <text evidence="5">Causes an allergic reaction in human. Binds weakly to IgE in 38% of the 13 patients tested allergic to crustaceans (crayfish and shrimp).</text>
</comment>
<comment type="similarity">
    <text evidence="3 4">Belongs to the triosephosphate isomerase family.</text>
</comment>
<dbReference type="EC" id="5.3.1.1" evidence="3 4"/>
<dbReference type="EC" id="4.2.3.3" evidence="1"/>
<dbReference type="EMBL" id="HQ414580">
    <property type="protein sequence ID" value="AEB54655.1"/>
    <property type="molecule type" value="mRNA"/>
</dbReference>
<dbReference type="RefSeq" id="XP_045605842.1">
    <property type="nucleotide sequence ID" value="XM_045749886.2"/>
</dbReference>
<dbReference type="SMR" id="F5A6E9"/>
<dbReference type="Allergome" id="12144">
    <property type="allergen name" value="Pro c 8"/>
</dbReference>
<dbReference type="Allergome" id="12145">
    <property type="allergen name" value="Pro c 8.0101"/>
</dbReference>
<dbReference type="EnsemblMetazoa" id="XM_045749886.1">
    <property type="protein sequence ID" value="XP_045605842.1"/>
    <property type="gene ID" value="LOC123762994"/>
</dbReference>
<dbReference type="GeneID" id="123762994"/>
<dbReference type="OrthoDB" id="6715177at2759"/>
<dbReference type="UniPathway" id="UPA00109">
    <property type="reaction ID" value="UER00189"/>
</dbReference>
<dbReference type="UniPathway" id="UPA00138"/>
<dbReference type="GO" id="GO:0005737">
    <property type="term" value="C:cytoplasm"/>
    <property type="evidence" value="ECO:0000250"/>
    <property type="project" value="UniProtKB"/>
</dbReference>
<dbReference type="GO" id="GO:0005829">
    <property type="term" value="C:cytosol"/>
    <property type="evidence" value="ECO:0007669"/>
    <property type="project" value="TreeGrafter"/>
</dbReference>
<dbReference type="GO" id="GO:0019863">
    <property type="term" value="F:IgE binding"/>
    <property type="evidence" value="ECO:0007669"/>
    <property type="project" value="UniProtKB-KW"/>
</dbReference>
<dbReference type="GO" id="GO:0008929">
    <property type="term" value="F:methylglyoxal synthase activity"/>
    <property type="evidence" value="ECO:0000250"/>
    <property type="project" value="UniProtKB"/>
</dbReference>
<dbReference type="GO" id="GO:0042803">
    <property type="term" value="F:protein homodimerization activity"/>
    <property type="evidence" value="ECO:0000250"/>
    <property type="project" value="UniProtKB"/>
</dbReference>
<dbReference type="GO" id="GO:0004807">
    <property type="term" value="F:triose-phosphate isomerase activity"/>
    <property type="evidence" value="ECO:0000250"/>
    <property type="project" value="UniProtKB"/>
</dbReference>
<dbReference type="GO" id="GO:0006094">
    <property type="term" value="P:gluconeogenesis"/>
    <property type="evidence" value="ECO:0007669"/>
    <property type="project" value="UniProtKB-UniPathway"/>
</dbReference>
<dbReference type="GO" id="GO:0046166">
    <property type="term" value="P:glyceraldehyde-3-phosphate biosynthetic process"/>
    <property type="evidence" value="ECO:0000250"/>
    <property type="project" value="UniProtKB"/>
</dbReference>
<dbReference type="GO" id="GO:0019563">
    <property type="term" value="P:glycerol catabolic process"/>
    <property type="evidence" value="ECO:0007669"/>
    <property type="project" value="TreeGrafter"/>
</dbReference>
<dbReference type="GO" id="GO:0006096">
    <property type="term" value="P:glycolytic process"/>
    <property type="evidence" value="ECO:0007669"/>
    <property type="project" value="UniProtKB-UniPathway"/>
</dbReference>
<dbReference type="GO" id="GO:0019242">
    <property type="term" value="P:methylglyoxal biosynthetic process"/>
    <property type="evidence" value="ECO:0000250"/>
    <property type="project" value="UniProtKB"/>
</dbReference>
<dbReference type="CDD" id="cd00311">
    <property type="entry name" value="TIM"/>
    <property type="match status" value="1"/>
</dbReference>
<dbReference type="FunFam" id="3.20.20.70:FF:000025">
    <property type="entry name" value="Triosephosphate isomerase"/>
    <property type="match status" value="1"/>
</dbReference>
<dbReference type="Gene3D" id="3.20.20.70">
    <property type="entry name" value="Aldolase class I"/>
    <property type="match status" value="1"/>
</dbReference>
<dbReference type="HAMAP" id="MF_00147_B">
    <property type="entry name" value="TIM_B"/>
    <property type="match status" value="1"/>
</dbReference>
<dbReference type="InterPro" id="IPR013785">
    <property type="entry name" value="Aldolase_TIM"/>
</dbReference>
<dbReference type="InterPro" id="IPR035990">
    <property type="entry name" value="TIM_sf"/>
</dbReference>
<dbReference type="InterPro" id="IPR022896">
    <property type="entry name" value="TrioseP_Isoase_bac/euk"/>
</dbReference>
<dbReference type="InterPro" id="IPR000652">
    <property type="entry name" value="Triosephosphate_isomerase"/>
</dbReference>
<dbReference type="InterPro" id="IPR020861">
    <property type="entry name" value="Triosephosphate_isomerase_AS"/>
</dbReference>
<dbReference type="NCBIfam" id="TIGR00419">
    <property type="entry name" value="tim"/>
    <property type="match status" value="1"/>
</dbReference>
<dbReference type="PANTHER" id="PTHR21139">
    <property type="entry name" value="TRIOSEPHOSPHATE ISOMERASE"/>
    <property type="match status" value="1"/>
</dbReference>
<dbReference type="PANTHER" id="PTHR21139:SF2">
    <property type="entry name" value="TRIOSEPHOSPHATE ISOMERASE"/>
    <property type="match status" value="1"/>
</dbReference>
<dbReference type="Pfam" id="PF00121">
    <property type="entry name" value="TIM"/>
    <property type="match status" value="1"/>
</dbReference>
<dbReference type="SUPFAM" id="SSF51351">
    <property type="entry name" value="Triosephosphate isomerase (TIM)"/>
    <property type="match status" value="1"/>
</dbReference>
<dbReference type="PROSITE" id="PS00171">
    <property type="entry name" value="TIM_1"/>
    <property type="match status" value="1"/>
</dbReference>
<dbReference type="PROSITE" id="PS51440">
    <property type="entry name" value="TIM_2"/>
    <property type="match status" value="1"/>
</dbReference>
<reference evidence="8" key="1">
    <citation type="submission" date="2010-10" db="EMBL/GenBank/DDBJ databases">
        <title>Molecular cloning of 47 genes in the red swamp crayfish, Procambarus clarkii.</title>
        <authorList>
            <person name="Dong Z."/>
            <person name="Zhao Q."/>
        </authorList>
    </citation>
    <scope>NUCLEOTIDE SEQUENCE [MRNA]</scope>
</reference>
<reference key="2">
    <citation type="journal article" date="2017" name="J. Agric. Food Chem.">
        <title>Triosephosphate Isomerase and Filamin C Share Common Epitopes as Novel Allergens of Procambarus clarkii.</title>
        <authorList>
            <person name="Yang Y."/>
            <person name="Zhang Y.X."/>
            <person name="Liu M."/>
            <person name="Maleki S.J."/>
            <person name="Zhang M.L."/>
            <person name="Liu Q.M."/>
            <person name="Cao M.J."/>
            <person name="Su W.J."/>
            <person name="Liu G.M."/>
        </authorList>
    </citation>
    <scope>PROTEIN SEQUENCE OF 7-14; 20-30; 53-68; 72-84; 99-112; 113-122; 123-134; 135-148; 149-159; 175-189; 188-193; 190-205; 206-222 AND 223-248</scope>
    <scope>BIOPHYSICOCHEMICAL PROPERTIES</scope>
    <scope>TISSUE SPECIFICITY</scope>
    <scope>IDENTIFICATION BY MASS SPECTROMETRY</scope>
    <scope>ALLERGEN</scope>
    <scope>3D-STRUCTURE MODELING</scope>
    <scope>REGIONS</scope>
    <scope>CIRCULAR DICHROISM ANALYSIS</scope>
    <source>
        <tissue evidence="6">Skeletal muscle</tissue>
    </source>
</reference>
<feature type="initiator methionine" description="Removed" evidence="2">
    <location>
        <position position="1"/>
    </location>
</feature>
<feature type="chain" id="PRO_0000449137" description="Triosephosphate isomerase">
    <location>
        <begin position="2"/>
        <end position="248"/>
    </location>
</feature>
<feature type="region of interest" description="IgE-binding" evidence="5">
    <location>
        <begin position="16"/>
        <end position="30"/>
    </location>
</feature>
<feature type="region of interest" description="IgE-binding" evidence="5">
    <location>
        <begin position="166"/>
        <end position="180"/>
    </location>
</feature>
<feature type="region of interest" description="IgE-binding" evidence="5">
    <location>
        <begin position="205"/>
        <end position="219"/>
    </location>
</feature>
<feature type="active site" description="Electrophile" evidence="3">
    <location>
        <position position="95"/>
    </location>
</feature>
<feature type="active site" description="Proton acceptor" evidence="3">
    <location>
        <position position="165"/>
    </location>
</feature>
<feature type="binding site" evidence="3">
    <location>
        <position position="12"/>
    </location>
    <ligand>
        <name>substrate</name>
    </ligand>
</feature>
<feature type="binding site" evidence="3">
    <location>
        <position position="14"/>
    </location>
    <ligand>
        <name>substrate</name>
    </ligand>
</feature>
<name>TPIS_PROCL</name>
<proteinExistence type="evidence at protein level"/>
<organism evidence="8">
    <name type="scientific">Procambarus clarkii</name>
    <name type="common">Red swamp crayfish</name>
    <dbReference type="NCBI Taxonomy" id="6728"/>
    <lineage>
        <taxon>Eukaryota</taxon>
        <taxon>Metazoa</taxon>
        <taxon>Ecdysozoa</taxon>
        <taxon>Arthropoda</taxon>
        <taxon>Crustacea</taxon>
        <taxon>Multicrustacea</taxon>
        <taxon>Malacostraca</taxon>
        <taxon>Eumalacostraca</taxon>
        <taxon>Eucarida</taxon>
        <taxon>Decapoda</taxon>
        <taxon>Pleocyemata</taxon>
        <taxon>Astacidea</taxon>
        <taxon>Astacoidea</taxon>
        <taxon>Cambaridae</taxon>
        <taxon>Procambarus</taxon>
    </lineage>
</organism>
<accession>F5A6E9</accession>